<comment type="similarity">
    <text evidence="1">Belongs to the isochorismatase family.</text>
</comment>
<gene>
    <name type="ORF">DDB_G0283199</name>
</gene>
<organism>
    <name type="scientific">Dictyostelium discoideum</name>
    <name type="common">Social amoeba</name>
    <dbReference type="NCBI Taxonomy" id="44689"/>
    <lineage>
        <taxon>Eukaryota</taxon>
        <taxon>Amoebozoa</taxon>
        <taxon>Evosea</taxon>
        <taxon>Eumycetozoa</taxon>
        <taxon>Dictyostelia</taxon>
        <taxon>Dictyosteliales</taxon>
        <taxon>Dictyosteliaceae</taxon>
        <taxon>Dictyostelium</taxon>
    </lineage>
</organism>
<sequence>MGDILDYNTTALFICDPQKYYLDRVGGIDVIVRNIKCLIDSCKELEIKTFMTKHNPSIYDEIIEELEPSNHPVFEKTLYSMYTKDLKKNIDELYNSNVRDPTNYLRTVILAGFETHVCIIQTALDLIREGYTVHVITDATASIDSLEYTASLKRLKQSGVYLTTTEAVLFQLLRDDANPKSSKIIDLITNRSISLPSYYKEDEYGVQITHSKSN</sequence>
<keyword id="KW-1185">Reference proteome</keyword>
<accession>Q54RC7</accession>
<proteinExistence type="inferred from homology"/>
<name>ISC2B_DICDI</name>
<evidence type="ECO:0000305" key="1"/>
<feature type="chain" id="PRO_0000331278" description="Isochorismatase family protein 2B">
    <location>
        <begin position="1"/>
        <end position="214"/>
    </location>
</feature>
<protein>
    <recommendedName>
        <fullName>Isochorismatase family protein 2B</fullName>
    </recommendedName>
</protein>
<dbReference type="EMBL" id="AAFI02000051">
    <property type="protein sequence ID" value="EAL65838.1"/>
    <property type="molecule type" value="Genomic_DNA"/>
</dbReference>
<dbReference type="RefSeq" id="XP_639218.1">
    <property type="nucleotide sequence ID" value="XM_634126.1"/>
</dbReference>
<dbReference type="SMR" id="Q54RC7"/>
<dbReference type="STRING" id="44689.Q54RC7"/>
<dbReference type="PaxDb" id="44689-DDB0185412"/>
<dbReference type="EnsemblProtists" id="EAL65838">
    <property type="protein sequence ID" value="EAL65838"/>
    <property type="gene ID" value="DDB_G0283199"/>
</dbReference>
<dbReference type="GeneID" id="8623991"/>
<dbReference type="KEGG" id="ddi:DDB_G0283199"/>
<dbReference type="dictyBase" id="DDB_G0283199"/>
<dbReference type="VEuPathDB" id="AmoebaDB:DDB_G0283199"/>
<dbReference type="eggNOG" id="KOG4044">
    <property type="taxonomic scope" value="Eukaryota"/>
</dbReference>
<dbReference type="HOGENOM" id="CLU_066901_0_1_1"/>
<dbReference type="InParanoid" id="Q54RC7"/>
<dbReference type="OMA" id="QAGCVIT"/>
<dbReference type="PhylomeDB" id="Q54RC7"/>
<dbReference type="PRO" id="PR:Q54RC7"/>
<dbReference type="Proteomes" id="UP000002195">
    <property type="component" value="Chromosome 4"/>
</dbReference>
<dbReference type="Gene3D" id="3.40.50.850">
    <property type="entry name" value="Isochorismatase-like"/>
    <property type="match status" value="1"/>
</dbReference>
<dbReference type="InterPro" id="IPR000868">
    <property type="entry name" value="Isochorismatase-like_dom"/>
</dbReference>
<dbReference type="InterPro" id="IPR036380">
    <property type="entry name" value="Isochorismatase-like_sf"/>
</dbReference>
<dbReference type="InterPro" id="IPR050993">
    <property type="entry name" value="Isochorismatase_domain"/>
</dbReference>
<dbReference type="PANTHER" id="PTHR14119">
    <property type="entry name" value="HYDROLASE"/>
    <property type="match status" value="1"/>
</dbReference>
<dbReference type="PANTHER" id="PTHR14119:SF12">
    <property type="entry name" value="ISOCHORISMATASE FAMILY PROTEIN 2A-RELATED"/>
    <property type="match status" value="1"/>
</dbReference>
<dbReference type="Pfam" id="PF00857">
    <property type="entry name" value="Isochorismatase"/>
    <property type="match status" value="1"/>
</dbReference>
<dbReference type="SUPFAM" id="SSF52499">
    <property type="entry name" value="Isochorismatase-like hydrolases"/>
    <property type="match status" value="1"/>
</dbReference>
<reference key="1">
    <citation type="journal article" date="2005" name="Nature">
        <title>The genome of the social amoeba Dictyostelium discoideum.</title>
        <authorList>
            <person name="Eichinger L."/>
            <person name="Pachebat J.A."/>
            <person name="Gloeckner G."/>
            <person name="Rajandream M.A."/>
            <person name="Sucgang R."/>
            <person name="Berriman M."/>
            <person name="Song J."/>
            <person name="Olsen R."/>
            <person name="Szafranski K."/>
            <person name="Xu Q."/>
            <person name="Tunggal B."/>
            <person name="Kummerfeld S."/>
            <person name="Madera M."/>
            <person name="Konfortov B.A."/>
            <person name="Rivero F."/>
            <person name="Bankier A.T."/>
            <person name="Lehmann R."/>
            <person name="Hamlin N."/>
            <person name="Davies R."/>
            <person name="Gaudet P."/>
            <person name="Fey P."/>
            <person name="Pilcher K."/>
            <person name="Chen G."/>
            <person name="Saunders D."/>
            <person name="Sodergren E.J."/>
            <person name="Davis P."/>
            <person name="Kerhornou A."/>
            <person name="Nie X."/>
            <person name="Hall N."/>
            <person name="Anjard C."/>
            <person name="Hemphill L."/>
            <person name="Bason N."/>
            <person name="Farbrother P."/>
            <person name="Desany B."/>
            <person name="Just E."/>
            <person name="Morio T."/>
            <person name="Rost R."/>
            <person name="Churcher C.M."/>
            <person name="Cooper J."/>
            <person name="Haydock S."/>
            <person name="van Driessche N."/>
            <person name="Cronin A."/>
            <person name="Goodhead I."/>
            <person name="Muzny D.M."/>
            <person name="Mourier T."/>
            <person name="Pain A."/>
            <person name="Lu M."/>
            <person name="Harper D."/>
            <person name="Lindsay R."/>
            <person name="Hauser H."/>
            <person name="James K.D."/>
            <person name="Quiles M."/>
            <person name="Madan Babu M."/>
            <person name="Saito T."/>
            <person name="Buchrieser C."/>
            <person name="Wardroper A."/>
            <person name="Felder M."/>
            <person name="Thangavelu M."/>
            <person name="Johnson D."/>
            <person name="Knights A."/>
            <person name="Loulseged H."/>
            <person name="Mungall K.L."/>
            <person name="Oliver K."/>
            <person name="Price C."/>
            <person name="Quail M.A."/>
            <person name="Urushihara H."/>
            <person name="Hernandez J."/>
            <person name="Rabbinowitsch E."/>
            <person name="Steffen D."/>
            <person name="Sanders M."/>
            <person name="Ma J."/>
            <person name="Kohara Y."/>
            <person name="Sharp S."/>
            <person name="Simmonds M.N."/>
            <person name="Spiegler S."/>
            <person name="Tivey A."/>
            <person name="Sugano S."/>
            <person name="White B."/>
            <person name="Walker D."/>
            <person name="Woodward J.R."/>
            <person name="Winckler T."/>
            <person name="Tanaka Y."/>
            <person name="Shaulsky G."/>
            <person name="Schleicher M."/>
            <person name="Weinstock G.M."/>
            <person name="Rosenthal A."/>
            <person name="Cox E.C."/>
            <person name="Chisholm R.L."/>
            <person name="Gibbs R.A."/>
            <person name="Loomis W.F."/>
            <person name="Platzer M."/>
            <person name="Kay R.R."/>
            <person name="Williams J.G."/>
            <person name="Dear P.H."/>
            <person name="Noegel A.A."/>
            <person name="Barrell B.G."/>
            <person name="Kuspa A."/>
        </authorList>
    </citation>
    <scope>NUCLEOTIDE SEQUENCE [LARGE SCALE GENOMIC DNA]</scope>
    <source>
        <strain>AX4</strain>
    </source>
</reference>